<accession>Q6PCE3</accession>
<accession>Q96MQ7</accession>
<accession>Q9UIK3</accession>
<reference key="1">
    <citation type="submission" date="1998-10" db="EMBL/GenBank/DDBJ databases">
        <authorList>
            <person name="Mori K."/>
            <person name="Miyoshi Y."/>
            <person name="Nakamura Y."/>
        </authorList>
    </citation>
    <scope>NUCLEOTIDE SEQUENCE [MRNA]</scope>
    <source>
        <tissue>Brain</tissue>
    </source>
</reference>
<reference key="2">
    <citation type="journal article" date="2004" name="Nat. Genet.">
        <title>Complete sequencing and characterization of 21,243 full-length human cDNAs.</title>
        <authorList>
            <person name="Ota T."/>
            <person name="Suzuki Y."/>
            <person name="Nishikawa T."/>
            <person name="Otsuki T."/>
            <person name="Sugiyama T."/>
            <person name="Irie R."/>
            <person name="Wakamatsu A."/>
            <person name="Hayashi K."/>
            <person name="Sato H."/>
            <person name="Nagai K."/>
            <person name="Kimura K."/>
            <person name="Makita H."/>
            <person name="Sekine M."/>
            <person name="Obayashi M."/>
            <person name="Nishi T."/>
            <person name="Shibahara T."/>
            <person name="Tanaka T."/>
            <person name="Ishii S."/>
            <person name="Yamamoto J."/>
            <person name="Saito K."/>
            <person name="Kawai Y."/>
            <person name="Isono Y."/>
            <person name="Nakamura Y."/>
            <person name="Nagahari K."/>
            <person name="Murakami K."/>
            <person name="Yasuda T."/>
            <person name="Iwayanagi T."/>
            <person name="Wagatsuma M."/>
            <person name="Shiratori A."/>
            <person name="Sudo H."/>
            <person name="Hosoiri T."/>
            <person name="Kaku Y."/>
            <person name="Kodaira H."/>
            <person name="Kondo H."/>
            <person name="Sugawara M."/>
            <person name="Takahashi M."/>
            <person name="Kanda K."/>
            <person name="Yokoi T."/>
            <person name="Furuya T."/>
            <person name="Kikkawa E."/>
            <person name="Omura Y."/>
            <person name="Abe K."/>
            <person name="Kamihara K."/>
            <person name="Katsuta N."/>
            <person name="Sato K."/>
            <person name="Tanikawa M."/>
            <person name="Yamazaki M."/>
            <person name="Ninomiya K."/>
            <person name="Ishibashi T."/>
            <person name="Yamashita H."/>
            <person name="Murakawa K."/>
            <person name="Fujimori K."/>
            <person name="Tanai H."/>
            <person name="Kimata M."/>
            <person name="Watanabe M."/>
            <person name="Hiraoka S."/>
            <person name="Chiba Y."/>
            <person name="Ishida S."/>
            <person name="Ono Y."/>
            <person name="Takiguchi S."/>
            <person name="Watanabe S."/>
            <person name="Yosida M."/>
            <person name="Hotuta T."/>
            <person name="Kusano J."/>
            <person name="Kanehori K."/>
            <person name="Takahashi-Fujii A."/>
            <person name="Hara H."/>
            <person name="Tanase T.-O."/>
            <person name="Nomura Y."/>
            <person name="Togiya S."/>
            <person name="Komai F."/>
            <person name="Hara R."/>
            <person name="Takeuchi K."/>
            <person name="Arita M."/>
            <person name="Imose N."/>
            <person name="Musashino K."/>
            <person name="Yuuki H."/>
            <person name="Oshima A."/>
            <person name="Sasaki N."/>
            <person name="Aotsuka S."/>
            <person name="Yoshikawa Y."/>
            <person name="Matsunawa H."/>
            <person name="Ichihara T."/>
            <person name="Shiohata N."/>
            <person name="Sano S."/>
            <person name="Moriya S."/>
            <person name="Momiyama H."/>
            <person name="Satoh N."/>
            <person name="Takami S."/>
            <person name="Terashima Y."/>
            <person name="Suzuki O."/>
            <person name="Nakagawa S."/>
            <person name="Senoh A."/>
            <person name="Mizoguchi H."/>
            <person name="Goto Y."/>
            <person name="Shimizu F."/>
            <person name="Wakebe H."/>
            <person name="Hishigaki H."/>
            <person name="Watanabe T."/>
            <person name="Sugiyama A."/>
            <person name="Takemoto M."/>
            <person name="Kawakami B."/>
            <person name="Yamazaki M."/>
            <person name="Watanabe K."/>
            <person name="Kumagai A."/>
            <person name="Itakura S."/>
            <person name="Fukuzumi Y."/>
            <person name="Fujimori Y."/>
            <person name="Komiyama M."/>
            <person name="Tashiro H."/>
            <person name="Tanigami A."/>
            <person name="Fujiwara T."/>
            <person name="Ono T."/>
            <person name="Yamada K."/>
            <person name="Fujii Y."/>
            <person name="Ozaki K."/>
            <person name="Hirao M."/>
            <person name="Ohmori Y."/>
            <person name="Kawabata A."/>
            <person name="Hikiji T."/>
            <person name="Kobatake N."/>
            <person name="Inagaki H."/>
            <person name="Ikema Y."/>
            <person name="Okamoto S."/>
            <person name="Okitani R."/>
            <person name="Kawakami T."/>
            <person name="Noguchi S."/>
            <person name="Itoh T."/>
            <person name="Shigeta K."/>
            <person name="Senba T."/>
            <person name="Matsumura K."/>
            <person name="Nakajima Y."/>
            <person name="Mizuno T."/>
            <person name="Morinaga M."/>
            <person name="Sasaki M."/>
            <person name="Togashi T."/>
            <person name="Oyama M."/>
            <person name="Hata H."/>
            <person name="Watanabe M."/>
            <person name="Komatsu T."/>
            <person name="Mizushima-Sugano J."/>
            <person name="Satoh T."/>
            <person name="Shirai Y."/>
            <person name="Takahashi Y."/>
            <person name="Nakagawa K."/>
            <person name="Okumura K."/>
            <person name="Nagase T."/>
            <person name="Nomura N."/>
            <person name="Kikuchi H."/>
            <person name="Masuho Y."/>
            <person name="Yamashita R."/>
            <person name="Nakai K."/>
            <person name="Yada T."/>
            <person name="Nakamura Y."/>
            <person name="Ohara O."/>
            <person name="Isogai T."/>
            <person name="Sugano S."/>
        </authorList>
    </citation>
    <scope>NUCLEOTIDE SEQUENCE [LARGE SCALE MRNA]</scope>
    <scope>VARIANT ILE-531</scope>
    <source>
        <tissue>Tongue</tissue>
    </source>
</reference>
<reference key="3">
    <citation type="journal article" date="2006" name="Nature">
        <title>Human chromosome 11 DNA sequence and analysis including novel gene identification.</title>
        <authorList>
            <person name="Taylor T.D."/>
            <person name="Noguchi H."/>
            <person name="Totoki Y."/>
            <person name="Toyoda A."/>
            <person name="Kuroki Y."/>
            <person name="Dewar K."/>
            <person name="Lloyd C."/>
            <person name="Itoh T."/>
            <person name="Takeda T."/>
            <person name="Kim D.-W."/>
            <person name="She X."/>
            <person name="Barlow K.F."/>
            <person name="Bloom T."/>
            <person name="Bruford E."/>
            <person name="Chang J.L."/>
            <person name="Cuomo C.A."/>
            <person name="Eichler E."/>
            <person name="FitzGerald M.G."/>
            <person name="Jaffe D.B."/>
            <person name="LaButti K."/>
            <person name="Nicol R."/>
            <person name="Park H.-S."/>
            <person name="Seaman C."/>
            <person name="Sougnez C."/>
            <person name="Yang X."/>
            <person name="Zimmer A.R."/>
            <person name="Zody M.C."/>
            <person name="Birren B.W."/>
            <person name="Nusbaum C."/>
            <person name="Fujiyama A."/>
            <person name="Hattori M."/>
            <person name="Rogers J."/>
            <person name="Lander E.S."/>
            <person name="Sakaki Y."/>
        </authorList>
    </citation>
    <scope>NUCLEOTIDE SEQUENCE [LARGE SCALE GENOMIC DNA]</scope>
</reference>
<reference key="4">
    <citation type="journal article" date="2004" name="Genome Res.">
        <title>The status, quality, and expansion of the NIH full-length cDNA project: the Mammalian Gene Collection (MGC).</title>
        <authorList>
            <consortium name="The MGC Project Team"/>
        </authorList>
    </citation>
    <scope>NUCLEOTIDE SEQUENCE [LARGE SCALE MRNA]</scope>
    <scope>VARIANTS PRO-14 AND ILE-531</scope>
    <source>
        <tissue>Placenta</tissue>
    </source>
</reference>
<reference key="5">
    <citation type="journal article" date="2007" name="J. Biol. Chem.">
        <title>Molecular identification of mammalian phosphopentomutase and glucose-1,6-bisphosphate synthase, two members of the alpha-D-phosphohexomutase family.</title>
        <authorList>
            <person name="Maliekal P."/>
            <person name="Sokolova T."/>
            <person name="Vertommen D."/>
            <person name="Veiga-da-Cunha M."/>
            <person name="Van Schaftingen E."/>
        </authorList>
    </citation>
    <scope>FUNCTION</scope>
    <scope>CATALYTIC ACTIVITY</scope>
    <scope>BIOPHYSICOCHEMICAL PROPERTIES</scope>
    <scope>SUBCELLULAR LOCATION</scope>
</reference>
<reference key="6">
    <citation type="journal article" date="2008" name="J. Biol. Chem.">
        <title>Mammalian phosphomannomutase PMM1 is the brain IMP-sensitive glucose-1,6-bisphosphatase.</title>
        <authorList>
            <person name="Veiga-da-Cunha M."/>
            <person name="Vleugels W."/>
            <person name="Maliekal P."/>
            <person name="Matthijs G."/>
            <person name="Van Schaftingen E."/>
        </authorList>
    </citation>
    <scope>FUNCTION</scope>
    <scope>CATALYTIC ACTIVITY</scope>
</reference>
<reference key="7">
    <citation type="journal article" date="2008" name="Proc. Natl. Acad. Sci. U.S.A.">
        <title>A quantitative atlas of mitotic phosphorylation.</title>
        <authorList>
            <person name="Dephoure N."/>
            <person name="Zhou C."/>
            <person name="Villen J."/>
            <person name="Beausoleil S.A."/>
            <person name="Bakalarski C.E."/>
            <person name="Elledge S.J."/>
            <person name="Gygi S.P."/>
        </authorList>
    </citation>
    <scope>PHOSPHORYLATION [LARGE SCALE ANALYSIS] AT SER-175</scope>
    <scope>IDENTIFICATION BY MASS SPECTROMETRY [LARGE SCALE ANALYSIS]</scope>
    <source>
        <tissue>Cervix carcinoma</tissue>
    </source>
</reference>
<reference key="8">
    <citation type="journal article" date="2009" name="Anal. Chem.">
        <title>Lys-N and trypsin cover complementary parts of the phosphoproteome in a refined SCX-based approach.</title>
        <authorList>
            <person name="Gauci S."/>
            <person name="Helbig A.O."/>
            <person name="Slijper M."/>
            <person name="Krijgsveld J."/>
            <person name="Heck A.J."/>
            <person name="Mohammed S."/>
        </authorList>
    </citation>
    <scope>IDENTIFICATION BY MASS SPECTROMETRY [LARGE SCALE ANALYSIS]</scope>
</reference>
<reference key="9">
    <citation type="journal article" date="2010" name="Sci. Signal.">
        <title>Quantitative phosphoproteomics reveals widespread full phosphorylation site occupancy during mitosis.</title>
        <authorList>
            <person name="Olsen J.V."/>
            <person name="Vermeulen M."/>
            <person name="Santamaria A."/>
            <person name="Kumar C."/>
            <person name="Miller M.L."/>
            <person name="Jensen L.J."/>
            <person name="Gnad F."/>
            <person name="Cox J."/>
            <person name="Jensen T.S."/>
            <person name="Nigg E.A."/>
            <person name="Brunak S."/>
            <person name="Mann M."/>
        </authorList>
    </citation>
    <scope>PHOSPHORYLATION [LARGE SCALE ANALYSIS] AT SER-175</scope>
    <scope>IDENTIFICATION BY MASS SPECTROMETRY [LARGE SCALE ANALYSIS]</scope>
    <source>
        <tissue>Cervix carcinoma</tissue>
    </source>
</reference>
<reference key="10">
    <citation type="journal article" date="2011" name="BMC Syst. Biol.">
        <title>Initial characterization of the human central proteome.</title>
        <authorList>
            <person name="Burkard T.R."/>
            <person name="Planyavsky M."/>
            <person name="Kaupe I."/>
            <person name="Breitwieser F.P."/>
            <person name="Buerckstuemmer T."/>
            <person name="Bennett K.L."/>
            <person name="Superti-Furga G."/>
            <person name="Colinge J."/>
        </authorList>
    </citation>
    <scope>IDENTIFICATION BY MASS SPECTROMETRY [LARGE SCALE ANALYSIS]</scope>
</reference>
<reference key="11">
    <citation type="journal article" date="2011" name="Sci. Signal.">
        <title>System-wide temporal characterization of the proteome and phosphoproteome of human embryonic stem cell differentiation.</title>
        <authorList>
            <person name="Rigbolt K.T."/>
            <person name="Prokhorova T.A."/>
            <person name="Akimov V."/>
            <person name="Henningsen J."/>
            <person name="Johansen P.T."/>
            <person name="Kratchmarova I."/>
            <person name="Kassem M."/>
            <person name="Mann M."/>
            <person name="Olsen J.V."/>
            <person name="Blagoev B."/>
        </authorList>
    </citation>
    <scope>PHOSPHORYLATION [LARGE SCALE ANALYSIS] AT SER-175</scope>
    <scope>IDENTIFICATION BY MASS SPECTROMETRY [LARGE SCALE ANALYSIS]</scope>
</reference>
<reference key="12">
    <citation type="journal article" date="2013" name="J. Proteome Res.">
        <title>Toward a comprehensive characterization of a human cancer cell phosphoproteome.</title>
        <authorList>
            <person name="Zhou H."/>
            <person name="Di Palma S."/>
            <person name="Preisinger C."/>
            <person name="Peng M."/>
            <person name="Polat A.N."/>
            <person name="Heck A.J."/>
            <person name="Mohammed S."/>
        </authorList>
    </citation>
    <scope>PHOSPHORYLATION [LARGE SCALE ANALYSIS] AT SER-175</scope>
    <scope>IDENTIFICATION BY MASS SPECTROMETRY [LARGE SCALE ANALYSIS]</scope>
    <source>
        <tissue>Cervix carcinoma</tissue>
        <tissue>Erythroleukemia</tissue>
    </source>
</reference>
<reference key="13">
    <citation type="journal article" date="2014" name="J. Proteomics">
        <title>An enzyme assisted RP-RPLC approach for in-depth analysis of human liver phosphoproteome.</title>
        <authorList>
            <person name="Bian Y."/>
            <person name="Song C."/>
            <person name="Cheng K."/>
            <person name="Dong M."/>
            <person name="Wang F."/>
            <person name="Huang J."/>
            <person name="Sun D."/>
            <person name="Wang L."/>
            <person name="Ye M."/>
            <person name="Zou H."/>
        </authorList>
    </citation>
    <scope>IDENTIFICATION BY MASS SPECTROMETRY [LARGE SCALE ANALYSIS]</scope>
    <source>
        <tissue>Liver</tissue>
    </source>
</reference>
<reference key="14">
    <citation type="journal article" date="2021" name="Am. J. Hum. Genet.">
        <title>Impaired glucose-1,6-biphosphate production due to bi-allelic PGM2L1 mutations is associated with a neurodevelopmental disorder.</title>
        <authorList>
            <person name="Morava E."/>
            <person name="Schatz U.A."/>
            <person name="Torring P.M."/>
            <person name="Abbott M.A."/>
            <person name="Baumann M."/>
            <person name="Brasch-Andersen C."/>
            <person name="Chevalier N."/>
            <person name="Dunkhase-Heinl U."/>
            <person name="Fleger M."/>
            <person name="Haack T.B."/>
            <person name="Nelson S."/>
            <person name="Potelle S."/>
            <person name="Radenkovic S."/>
            <person name="Bommer G.T."/>
            <person name="Van Schaftingen E."/>
            <person name="Veiga-da-Cunha M."/>
        </authorList>
    </citation>
    <scope>INVOLVEMENT IN NEDHFS</scope>
    <scope>VARIANTS NEDHFS 58-ARG--VAL-622 DEL AND 428-GLU--VAL-622 DEL</scope>
    <scope>FUNCTION</scope>
</reference>
<feature type="chain" id="PRO_0000147784" description="Glucose 1,6-bisphosphate synthase">
    <location>
        <begin position="1"/>
        <end position="622"/>
    </location>
</feature>
<feature type="active site" description="Phosphoserine intermediate" evidence="1">
    <location>
        <position position="175"/>
    </location>
</feature>
<feature type="binding site" evidence="1">
    <location>
        <position position="73"/>
    </location>
    <ligand>
        <name>alpha-D-glucose 1,6-bisphosphate</name>
        <dbReference type="ChEBI" id="CHEBI:58392"/>
    </ligand>
</feature>
<feature type="binding site" evidence="1">
    <location>
        <position position="175"/>
    </location>
    <ligand>
        <name>alpha-D-glucose 1,6-bisphosphate</name>
        <dbReference type="ChEBI" id="CHEBI:58392"/>
    </ligand>
</feature>
<feature type="binding site" description="via phosphate group" evidence="1">
    <location>
        <position position="175"/>
    </location>
    <ligand>
        <name>Mg(2+)</name>
        <dbReference type="ChEBI" id="CHEBI:18420"/>
    </ligand>
</feature>
<feature type="binding site" evidence="1">
    <location>
        <position position="332"/>
    </location>
    <ligand>
        <name>Mg(2+)</name>
        <dbReference type="ChEBI" id="CHEBI:18420"/>
    </ligand>
</feature>
<feature type="binding site" evidence="1">
    <location>
        <position position="334"/>
    </location>
    <ligand>
        <name>Mg(2+)</name>
        <dbReference type="ChEBI" id="CHEBI:18420"/>
    </ligand>
</feature>
<feature type="binding site" evidence="1">
    <location>
        <position position="336"/>
    </location>
    <ligand>
        <name>alpha-D-glucose 1,6-bisphosphate</name>
        <dbReference type="ChEBI" id="CHEBI:58392"/>
    </ligand>
</feature>
<feature type="binding site" evidence="1">
    <location>
        <position position="337"/>
    </location>
    <ligand>
        <name>alpha-D-glucose 1,6-bisphosphate</name>
        <dbReference type="ChEBI" id="CHEBI:58392"/>
    </ligand>
</feature>
<feature type="binding site" evidence="1">
    <location>
        <position position="434"/>
    </location>
    <ligand>
        <name>alpha-D-glucose 1,6-bisphosphate</name>
        <dbReference type="ChEBI" id="CHEBI:58392"/>
    </ligand>
</feature>
<feature type="binding site" evidence="1">
    <location>
        <position position="436"/>
    </location>
    <ligand>
        <name>alpha-D-glucose 1,6-bisphosphate</name>
        <dbReference type="ChEBI" id="CHEBI:58392"/>
    </ligand>
</feature>
<feature type="binding site" evidence="1">
    <location>
        <position position="448"/>
    </location>
    <ligand>
        <name>alpha-D-glucose 1,6-bisphosphate</name>
        <dbReference type="ChEBI" id="CHEBI:58392"/>
    </ligand>
</feature>
<feature type="modified residue" description="Phosphoserine" evidence="10 11 12 13">
    <location>
        <position position="175"/>
    </location>
</feature>
<feature type="sequence variant" id="VAR_028094" description="In dbSNP:rs12049823." evidence="3">
    <original>L</original>
    <variation>P</variation>
    <location>
        <position position="14"/>
    </location>
</feature>
<feature type="sequence variant" id="VAR_087994" description="In NEDHFS." evidence="6">
    <location>
        <begin position="58"/>
        <end position="622"/>
    </location>
</feature>
<feature type="sequence variant" id="VAR_087995" description="In NEDHFS." evidence="6">
    <location>
        <begin position="428"/>
        <end position="622"/>
    </location>
</feature>
<feature type="sequence variant" id="VAR_028095" description="In dbSNP:rs592644." evidence="2 3">
    <original>V</original>
    <variation>I</variation>
    <location>
        <position position="531"/>
    </location>
</feature>
<feature type="sequence variant" id="VAR_056665" description="In dbSNP:rs36014178.">
    <original>N</original>
    <variation>I</variation>
    <location>
        <position position="608"/>
    </location>
</feature>
<feature type="sequence conflict" description="In Ref. 2; BAB71227." evidence="7" ref="2">
    <original>T</original>
    <variation>A</variation>
    <location>
        <position position="69"/>
    </location>
</feature>
<protein>
    <recommendedName>
        <fullName evidence="8">Glucose 1,6-bisphosphate synthase</fullName>
        <ecNumber evidence="4">2.7.1.106</ecNumber>
    </recommendedName>
    <alternativeName>
        <fullName>PMMLP</fullName>
    </alternativeName>
    <alternativeName>
        <fullName>Phosphoglucomutase-2-like 1</fullName>
    </alternativeName>
</protein>
<keyword id="KW-0119">Carbohydrate metabolism</keyword>
<keyword id="KW-0963">Cytoplasm</keyword>
<keyword id="KW-0225">Disease variant</keyword>
<keyword id="KW-0313">Glucose metabolism</keyword>
<keyword id="KW-0991">Intellectual disability</keyword>
<keyword id="KW-0413">Isomerase</keyword>
<keyword id="KW-0460">Magnesium</keyword>
<keyword id="KW-0479">Metal-binding</keyword>
<keyword id="KW-0597">Phosphoprotein</keyword>
<keyword id="KW-1267">Proteomics identification</keyword>
<keyword id="KW-1185">Reference proteome</keyword>
<keyword id="KW-0808">Transferase</keyword>
<organism>
    <name type="scientific">Homo sapiens</name>
    <name type="common">Human</name>
    <dbReference type="NCBI Taxonomy" id="9606"/>
    <lineage>
        <taxon>Eukaryota</taxon>
        <taxon>Metazoa</taxon>
        <taxon>Chordata</taxon>
        <taxon>Craniata</taxon>
        <taxon>Vertebrata</taxon>
        <taxon>Euteleostomi</taxon>
        <taxon>Mammalia</taxon>
        <taxon>Eutheria</taxon>
        <taxon>Euarchontoglires</taxon>
        <taxon>Primates</taxon>
        <taxon>Haplorrhini</taxon>
        <taxon>Catarrhini</taxon>
        <taxon>Hominidae</taxon>
        <taxon>Homo</taxon>
    </lineage>
</organism>
<evidence type="ECO:0000250" key="1">
    <source>
        <dbReference type="UniProtKB" id="P00949"/>
    </source>
</evidence>
<evidence type="ECO:0000269" key="2">
    <source>
    </source>
</evidence>
<evidence type="ECO:0000269" key="3">
    <source>
    </source>
</evidence>
<evidence type="ECO:0000269" key="4">
    <source>
    </source>
</evidence>
<evidence type="ECO:0000269" key="5">
    <source>
    </source>
</evidence>
<evidence type="ECO:0000269" key="6">
    <source>
    </source>
</evidence>
<evidence type="ECO:0000305" key="7"/>
<evidence type="ECO:0000305" key="8">
    <source>
    </source>
</evidence>
<evidence type="ECO:0000312" key="9">
    <source>
        <dbReference type="HGNC" id="HGNC:20898"/>
    </source>
</evidence>
<evidence type="ECO:0007744" key="10">
    <source>
    </source>
</evidence>
<evidence type="ECO:0007744" key="11">
    <source>
    </source>
</evidence>
<evidence type="ECO:0007744" key="12">
    <source>
    </source>
</evidence>
<evidence type="ECO:0007744" key="13">
    <source>
    </source>
</evidence>
<dbReference type="EC" id="2.7.1.106" evidence="4"/>
<dbReference type="EMBL" id="AB019210">
    <property type="protein sequence ID" value="BAA82756.1"/>
    <property type="molecule type" value="mRNA"/>
</dbReference>
<dbReference type="EMBL" id="AK056591">
    <property type="protein sequence ID" value="BAB71227.1"/>
    <property type="molecule type" value="mRNA"/>
</dbReference>
<dbReference type="EMBL" id="AP001085">
    <property type="status" value="NOT_ANNOTATED_CDS"/>
    <property type="molecule type" value="Genomic_DNA"/>
</dbReference>
<dbReference type="EMBL" id="BC059360">
    <property type="protein sequence ID" value="AAH59360.1"/>
    <property type="molecule type" value="mRNA"/>
</dbReference>
<dbReference type="CCDS" id="CCDS8231.1"/>
<dbReference type="RefSeq" id="NP_775853.2">
    <property type="nucleotide sequence ID" value="NM_173582.4"/>
</dbReference>
<dbReference type="SMR" id="Q6PCE3"/>
<dbReference type="BioGRID" id="129496">
    <property type="interactions" value="24"/>
</dbReference>
<dbReference type="FunCoup" id="Q6PCE3">
    <property type="interactions" value="763"/>
</dbReference>
<dbReference type="IntAct" id="Q6PCE3">
    <property type="interactions" value="9"/>
</dbReference>
<dbReference type="MINT" id="Q6PCE3"/>
<dbReference type="STRING" id="9606.ENSP00000298198"/>
<dbReference type="GlyGen" id="Q6PCE3">
    <property type="glycosylation" value="1 site, 9 N-linked glycans (1 site)"/>
</dbReference>
<dbReference type="iPTMnet" id="Q6PCE3"/>
<dbReference type="PhosphoSitePlus" id="Q6PCE3"/>
<dbReference type="SwissPalm" id="Q6PCE3"/>
<dbReference type="BioMuta" id="PGM2L1"/>
<dbReference type="DMDM" id="317373530"/>
<dbReference type="jPOST" id="Q6PCE3"/>
<dbReference type="MassIVE" id="Q6PCE3"/>
<dbReference type="PaxDb" id="9606-ENSP00000298198"/>
<dbReference type="PeptideAtlas" id="Q6PCE3"/>
<dbReference type="ProteomicsDB" id="67064"/>
<dbReference type="Pumba" id="Q6PCE3"/>
<dbReference type="Antibodypedia" id="31067">
    <property type="antibodies" value="149 antibodies from 19 providers"/>
</dbReference>
<dbReference type="DNASU" id="283209"/>
<dbReference type="Ensembl" id="ENST00000298198.5">
    <property type="protein sequence ID" value="ENSP00000298198.4"/>
    <property type="gene ID" value="ENSG00000165434.8"/>
</dbReference>
<dbReference type="GeneID" id="283209"/>
<dbReference type="KEGG" id="hsa:283209"/>
<dbReference type="MANE-Select" id="ENST00000298198.5">
    <property type="protein sequence ID" value="ENSP00000298198.4"/>
    <property type="RefSeq nucleotide sequence ID" value="NM_173582.6"/>
    <property type="RefSeq protein sequence ID" value="NP_775853.2"/>
</dbReference>
<dbReference type="UCSC" id="uc001ovb.2">
    <property type="organism name" value="human"/>
</dbReference>
<dbReference type="AGR" id="HGNC:20898"/>
<dbReference type="CTD" id="283209"/>
<dbReference type="DisGeNET" id="283209"/>
<dbReference type="GeneCards" id="PGM2L1"/>
<dbReference type="HGNC" id="HGNC:20898">
    <property type="gene designation" value="PGM2L1"/>
</dbReference>
<dbReference type="HPA" id="ENSG00000165434">
    <property type="expression patterns" value="Tissue enhanced (brain)"/>
</dbReference>
<dbReference type="MalaCards" id="PGM2L1"/>
<dbReference type="MIM" id="611610">
    <property type="type" value="gene"/>
</dbReference>
<dbReference type="MIM" id="620191">
    <property type="type" value="phenotype"/>
</dbReference>
<dbReference type="neXtProt" id="NX_Q6PCE3"/>
<dbReference type="OpenTargets" id="ENSG00000165434"/>
<dbReference type="Orphanet" id="528084">
    <property type="disease" value="Non-specific syndromic intellectual disability"/>
</dbReference>
<dbReference type="PharmGKB" id="PA134938366"/>
<dbReference type="VEuPathDB" id="HostDB:ENSG00000165434"/>
<dbReference type="eggNOG" id="KOG1220">
    <property type="taxonomic scope" value="Eukaryota"/>
</dbReference>
<dbReference type="GeneTree" id="ENSGT00940000158353"/>
<dbReference type="HOGENOM" id="CLU_016950_0_1_1"/>
<dbReference type="InParanoid" id="Q6PCE3"/>
<dbReference type="OMA" id="RYKSKEF"/>
<dbReference type="OrthoDB" id="8300170at2759"/>
<dbReference type="PAN-GO" id="Q6PCE3">
    <property type="GO annotations" value="1 GO annotation based on evolutionary models"/>
</dbReference>
<dbReference type="PhylomeDB" id="Q6PCE3"/>
<dbReference type="TreeFam" id="TF300692"/>
<dbReference type="PathwayCommons" id="Q6PCE3"/>
<dbReference type="Reactome" id="R-HSA-70171">
    <property type="pathway name" value="Glycolysis"/>
</dbReference>
<dbReference type="SABIO-RK" id="Q6PCE3"/>
<dbReference type="SignaLink" id="Q6PCE3"/>
<dbReference type="BioGRID-ORCS" id="283209">
    <property type="hits" value="17 hits in 1159 CRISPR screens"/>
</dbReference>
<dbReference type="CD-CODE" id="FB4E32DD">
    <property type="entry name" value="Presynaptic clusters and postsynaptic densities"/>
</dbReference>
<dbReference type="ChiTaRS" id="PGM2L1">
    <property type="organism name" value="human"/>
</dbReference>
<dbReference type="GenomeRNAi" id="283209"/>
<dbReference type="Pharos" id="Q6PCE3">
    <property type="development level" value="Tbio"/>
</dbReference>
<dbReference type="PRO" id="PR:Q6PCE3"/>
<dbReference type="Proteomes" id="UP000005640">
    <property type="component" value="Chromosome 11"/>
</dbReference>
<dbReference type="RNAct" id="Q6PCE3">
    <property type="molecule type" value="protein"/>
</dbReference>
<dbReference type="Bgee" id="ENSG00000165434">
    <property type="expression patterns" value="Expressed in middle temporal gyrus and 188 other cell types or tissues"/>
</dbReference>
<dbReference type="GO" id="GO:0005829">
    <property type="term" value="C:cytosol"/>
    <property type="evidence" value="ECO:0000304"/>
    <property type="project" value="Reactome"/>
</dbReference>
<dbReference type="GO" id="GO:0047933">
    <property type="term" value="F:glucose-1,6-bisphosphate synthase activity"/>
    <property type="evidence" value="ECO:0000314"/>
    <property type="project" value="UniProtKB"/>
</dbReference>
<dbReference type="GO" id="GO:0016868">
    <property type="term" value="F:intramolecular phosphotransferase activity"/>
    <property type="evidence" value="ECO:0007669"/>
    <property type="project" value="InterPro"/>
</dbReference>
<dbReference type="GO" id="GO:0046872">
    <property type="term" value="F:metal ion binding"/>
    <property type="evidence" value="ECO:0007669"/>
    <property type="project" value="UniProtKB-KW"/>
</dbReference>
<dbReference type="GO" id="GO:0006006">
    <property type="term" value="P:glucose metabolic process"/>
    <property type="evidence" value="ECO:0007669"/>
    <property type="project" value="UniProtKB-KW"/>
</dbReference>
<dbReference type="CDD" id="cd05799">
    <property type="entry name" value="PGM2"/>
    <property type="match status" value="1"/>
</dbReference>
<dbReference type="FunFam" id="3.40.120.10:FF:000016">
    <property type="entry name" value="Glucose 1,6-bisphosphate synthase"/>
    <property type="match status" value="1"/>
</dbReference>
<dbReference type="FunFam" id="3.40.120.10:FF:000018">
    <property type="entry name" value="Glucose 1,6-bisphosphate synthase"/>
    <property type="match status" value="1"/>
</dbReference>
<dbReference type="FunFam" id="3.40.120.10:FF:000017">
    <property type="entry name" value="glucose 1,6-bisphosphate synthase"/>
    <property type="match status" value="1"/>
</dbReference>
<dbReference type="Gene3D" id="3.40.120.10">
    <property type="entry name" value="Alpha-D-Glucose-1,6-Bisphosphate, subunit A, domain 3"/>
    <property type="match status" value="3"/>
</dbReference>
<dbReference type="InterPro" id="IPR005844">
    <property type="entry name" value="A-D-PHexomutase_a/b/a-I"/>
</dbReference>
<dbReference type="InterPro" id="IPR016055">
    <property type="entry name" value="A-D-PHexomutase_a/b/a-I/II/III"/>
</dbReference>
<dbReference type="InterPro" id="IPR005845">
    <property type="entry name" value="A-D-PHexomutase_a/b/a-II"/>
</dbReference>
<dbReference type="InterPro" id="IPR005846">
    <property type="entry name" value="A-D-PHexomutase_a/b/a-III"/>
</dbReference>
<dbReference type="InterPro" id="IPR036900">
    <property type="entry name" value="A-D-PHexomutase_C_sf"/>
</dbReference>
<dbReference type="PANTHER" id="PTHR45745:SF2">
    <property type="entry name" value="GLUCOSE 1,6-BISPHOSPHATE SYNTHASE"/>
    <property type="match status" value="1"/>
</dbReference>
<dbReference type="PANTHER" id="PTHR45745">
    <property type="entry name" value="PHOSPHOMANNOMUTASE 45A"/>
    <property type="match status" value="1"/>
</dbReference>
<dbReference type="Pfam" id="PF02878">
    <property type="entry name" value="PGM_PMM_I"/>
    <property type="match status" value="1"/>
</dbReference>
<dbReference type="Pfam" id="PF02879">
    <property type="entry name" value="PGM_PMM_II"/>
    <property type="match status" value="1"/>
</dbReference>
<dbReference type="Pfam" id="PF02880">
    <property type="entry name" value="PGM_PMM_III"/>
    <property type="match status" value="1"/>
</dbReference>
<dbReference type="SUPFAM" id="SSF55957">
    <property type="entry name" value="Phosphoglucomutase, C-terminal domain"/>
    <property type="match status" value="1"/>
</dbReference>
<dbReference type="SUPFAM" id="SSF53738">
    <property type="entry name" value="Phosphoglucomutase, first 3 domains"/>
    <property type="match status" value="3"/>
</dbReference>
<sequence>MAENTEGDLNSNLLHAPYHTGDPQLDTAIGQWLRWDKNPKTKEQIENLLRNGMNKELRDRLCCRMTFGTAGLRSAMGAGFCYINDLTVIQSTQGMYKYLERCFSDFKQRGFVVGYDTRGQVTSSCSSQRLAKLTAAVLLAKDVPVYLFSRYVPTPFVPYAVQKLKAVAGVMITASHNRKEDNGYKVYWETGAQITSPHDKEILKCIEECVEPWNGSWNDNLVDTSPLKRDPLQDICRRYMEDLKKICFYRELNSKTTLKFVHTSFHGVGHDYVQLAFKVFGFKPPIPVPEQKDPDPDFSTVKCPNPEEGESVLELSLRLAEKENARVVLATDPDADRLAAAELQENGCWKVFTGNELAALFGWWMFDCWKKNKSRNADVKNVYMLATTVSSKILKAIALKEGFHFEETLPGFKWIGSRIIDLLENGKEVLFAFEESIGFLCGTSVLDKDGVSAAVVVAEMASYLETMNITLKQQLVKVYEKYGYHISKTSYFLCYEPPTIKSIFERLRNFDSPKEYPKFCGTFAILHVRDVTTGYDSSQPNKKSVLPVSKNSQMITFTFQNGCVATLRTSGTEPKIKYYAEMCASPDQSDTALLEEELKKLIDALIENFLQPSKNGLIWRSV</sequence>
<comment type="function">
    <text evidence="4 5 6">Glucose 1,6-bisphosphate synthase using 1,3-bisphosphoglycerate as a phosphate donor and a series of 1-phosphate sugars, including glucose 1-phosphate, mannose 1-phosphate, ribose 1-phosphate and deoxyribose 1-phosphate, as acceptors (PubMed:17804405). In vitro, also exhibits very low phosphopentomutase and phosphoglucomutase activity which are most probably not physiologically relevant (PubMed:17804405).</text>
</comment>
<comment type="catalytic activity">
    <reaction evidence="4 5">
        <text>(2R)-3-phospho-glyceroyl phosphate + alpha-D-glucose 1-phosphate = alpha-D-glucose 1,6-bisphosphate + (2R)-3-phosphoglycerate + H(+)</text>
        <dbReference type="Rhea" id="RHEA:16769"/>
        <dbReference type="ChEBI" id="CHEBI:15378"/>
        <dbReference type="ChEBI" id="CHEBI:57604"/>
        <dbReference type="ChEBI" id="CHEBI:58272"/>
        <dbReference type="ChEBI" id="CHEBI:58392"/>
        <dbReference type="ChEBI" id="CHEBI:58601"/>
        <dbReference type="EC" id="2.7.1.106"/>
    </reaction>
    <physiologicalReaction direction="left-to-right" evidence="5">
        <dbReference type="Rhea" id="RHEA:16770"/>
    </physiologicalReaction>
</comment>
<comment type="catalytic activity">
    <reaction evidence="4">
        <text>alpha-D-glucose 6-phosphate + (2R)-3-phospho-glyceroyl phosphate = alpha-D-glucose 1,6-bisphosphate + (2R)-3-phosphoglycerate + H(+)</text>
        <dbReference type="Rhea" id="RHEA:70911"/>
        <dbReference type="ChEBI" id="CHEBI:15378"/>
        <dbReference type="ChEBI" id="CHEBI:57604"/>
        <dbReference type="ChEBI" id="CHEBI:58225"/>
        <dbReference type="ChEBI" id="CHEBI:58272"/>
        <dbReference type="ChEBI" id="CHEBI:58392"/>
    </reaction>
    <physiologicalReaction direction="left-to-right" evidence="8">
        <dbReference type="Rhea" id="RHEA:70912"/>
    </physiologicalReaction>
</comment>
<comment type="catalytic activity">
    <reaction evidence="4">
        <text>(2R)-3-phospho-glyceroyl phosphate + alpha-D-ribose 1-phosphate = alpha-D-ribose 1,5-bisphosphate + (2R)-3-phosphoglycerate + H(+)</text>
        <dbReference type="Rhea" id="RHEA:70899"/>
        <dbReference type="ChEBI" id="CHEBI:15378"/>
        <dbReference type="ChEBI" id="CHEBI:57604"/>
        <dbReference type="ChEBI" id="CHEBI:57720"/>
        <dbReference type="ChEBI" id="CHEBI:58272"/>
        <dbReference type="ChEBI" id="CHEBI:68688"/>
    </reaction>
    <physiologicalReaction direction="left-to-right" evidence="8">
        <dbReference type="Rhea" id="RHEA:70900"/>
    </physiologicalReaction>
</comment>
<comment type="catalytic activity">
    <reaction evidence="4">
        <text>2-deoxy-alpha-D-ribose 1-phosphate + (2R)-3-phospho-glyceroyl phosphate = 2-deoxy-alpha-D-ribose 1,5-bisphosphate + (2R)-3-phosphoglycerate + H(+)</text>
        <dbReference type="Rhea" id="RHEA:70903"/>
        <dbReference type="ChEBI" id="CHEBI:15378"/>
        <dbReference type="ChEBI" id="CHEBI:57259"/>
        <dbReference type="ChEBI" id="CHEBI:57604"/>
        <dbReference type="ChEBI" id="CHEBI:58272"/>
        <dbReference type="ChEBI" id="CHEBI:190126"/>
    </reaction>
    <physiologicalReaction direction="left-to-right" evidence="8">
        <dbReference type="Rhea" id="RHEA:70904"/>
    </physiologicalReaction>
</comment>
<comment type="catalytic activity">
    <reaction evidence="4">
        <text>(2R)-3-phospho-glyceroyl phosphate + alpha-D-mannose 1-phosphate = alpha-D-mannose 1,6-bisphosphate + (2R)-3-phosphoglycerate + H(+)</text>
        <dbReference type="Rhea" id="RHEA:70907"/>
        <dbReference type="ChEBI" id="CHEBI:15378"/>
        <dbReference type="ChEBI" id="CHEBI:57604"/>
        <dbReference type="ChEBI" id="CHEBI:58272"/>
        <dbReference type="ChEBI" id="CHEBI:58409"/>
        <dbReference type="ChEBI" id="CHEBI:190127"/>
    </reaction>
    <physiologicalReaction direction="left-to-right" evidence="8">
        <dbReference type="Rhea" id="RHEA:70908"/>
    </physiologicalReaction>
</comment>
<comment type="biophysicochemical properties">
    <kinetics>
        <KM evidence="4">0.32 mM for alpha-D-glucose 1-phosphate (for glucose 1,6-bisphosphate synthase activity)</KM>
        <KM evidence="4">0.44 mM for alpha-D-ribose 1-phosphate (for aldose-bisphosphate synthase activity)</KM>
        <KM evidence="4">0.3 mM for 2-deoxyribose 1-phosphate (for aldose-bisphosphate synthase activity)</KM>
        <KM evidence="4">0.79 mM for alpha-D-mannose 1-phosphate (for aldose-bisphosphate synthase activity)</KM>
        <KM evidence="4">0.36 mM for alpha-D-glucose 6-phosphate (for aldose-bisphosphate synthase activity)</KM>
        <Vmax evidence="4">1.45 umol/min/mg enzyme for alpha-D-glucose 1-phosphate</Vmax>
        <Vmax evidence="4">1.93 umol/min/mg enzyme for alpha-D-ribose 1-phosphate</Vmax>
        <Vmax evidence="4">1.36 umol/min/mg enzyme for 2-deoxyribose 1-phosphate</Vmax>
        <Vmax evidence="4">1.38 umol/min/mg enzyme for alpha-D-mannose 1-phosphate</Vmax>
        <Vmax evidence="4">0.77 umol/min/mg enzyme for alpha-D-glucose 6-phosphate</Vmax>
        <Vmax evidence="4">0.14 umol/min/mg enzyme for alpha-D-Ribose 5-phosphate</Vmax>
        <Vmax evidence="4">0.04 umol/min/mg enzyme for 2-deoxyribose 5-phosphate</Vmax>
    </kinetics>
</comment>
<comment type="subcellular location">
    <subcellularLocation>
        <location evidence="8">Cytoplasm</location>
        <location evidence="8">Cytosol</location>
    </subcellularLocation>
</comment>
<comment type="disease" evidence="6">
    <disease id="DI-06586">
        <name>Neurodevelopmental disorder with hypotonia, dysmorphic facies, and skin abnormalities</name>
        <acronym>NEDHFS</acronym>
        <description>An autosomal recessive neurodevelopmental disorder characterized by severe developmental and speech delay, dysmorphic facial features, ear anomalies, high arched palate, strabismus, hypotonia, and keratosis pilaris. Early obesity and seizures may be present in affected individuals.</description>
        <dbReference type="MIM" id="620191"/>
    </disease>
    <text>The disease is caused by variants affecting the gene represented in this entry.</text>
</comment>
<comment type="similarity">
    <text evidence="7">Belongs to the phosphohexose mutase family.</text>
</comment>
<proteinExistence type="evidence at protein level"/>
<gene>
    <name evidence="9" type="primary">PGM2L1</name>
    <name type="synonym">BM32A</name>
</gene>
<name>PGM2L_HUMAN</name>